<dbReference type="EMBL" id="CP000896">
    <property type="protein sequence ID" value="ABX80795.1"/>
    <property type="molecule type" value="Genomic_DNA"/>
</dbReference>
<dbReference type="RefSeq" id="WP_012242126.1">
    <property type="nucleotide sequence ID" value="NC_010163.1"/>
</dbReference>
<dbReference type="SMR" id="A9NEL5"/>
<dbReference type="STRING" id="441768.ACL_0169"/>
<dbReference type="GeneID" id="41338362"/>
<dbReference type="KEGG" id="acl:ACL_0169"/>
<dbReference type="eggNOG" id="COG0222">
    <property type="taxonomic scope" value="Bacteria"/>
</dbReference>
<dbReference type="HOGENOM" id="CLU_086499_3_2_14"/>
<dbReference type="OrthoDB" id="9811748at2"/>
<dbReference type="Proteomes" id="UP000008558">
    <property type="component" value="Chromosome"/>
</dbReference>
<dbReference type="GO" id="GO:0022625">
    <property type="term" value="C:cytosolic large ribosomal subunit"/>
    <property type="evidence" value="ECO:0007669"/>
    <property type="project" value="TreeGrafter"/>
</dbReference>
<dbReference type="GO" id="GO:0003729">
    <property type="term" value="F:mRNA binding"/>
    <property type="evidence" value="ECO:0007669"/>
    <property type="project" value="TreeGrafter"/>
</dbReference>
<dbReference type="GO" id="GO:0003735">
    <property type="term" value="F:structural constituent of ribosome"/>
    <property type="evidence" value="ECO:0007669"/>
    <property type="project" value="InterPro"/>
</dbReference>
<dbReference type="GO" id="GO:0006412">
    <property type="term" value="P:translation"/>
    <property type="evidence" value="ECO:0007669"/>
    <property type="project" value="UniProtKB-UniRule"/>
</dbReference>
<dbReference type="CDD" id="cd00387">
    <property type="entry name" value="Ribosomal_L7_L12"/>
    <property type="match status" value="1"/>
</dbReference>
<dbReference type="FunFam" id="3.30.1390.10:FF:000001">
    <property type="entry name" value="50S ribosomal protein L7/L12"/>
    <property type="match status" value="1"/>
</dbReference>
<dbReference type="Gene3D" id="3.30.1390.10">
    <property type="match status" value="1"/>
</dbReference>
<dbReference type="Gene3D" id="1.20.5.710">
    <property type="entry name" value="Single helix bin"/>
    <property type="match status" value="1"/>
</dbReference>
<dbReference type="HAMAP" id="MF_00368">
    <property type="entry name" value="Ribosomal_bL12"/>
    <property type="match status" value="1"/>
</dbReference>
<dbReference type="InterPro" id="IPR000206">
    <property type="entry name" value="Ribosomal_bL12"/>
</dbReference>
<dbReference type="InterPro" id="IPR013823">
    <property type="entry name" value="Ribosomal_bL12_C"/>
</dbReference>
<dbReference type="InterPro" id="IPR014719">
    <property type="entry name" value="Ribosomal_bL12_C/ClpS-like"/>
</dbReference>
<dbReference type="InterPro" id="IPR008932">
    <property type="entry name" value="Ribosomal_bL12_oligo"/>
</dbReference>
<dbReference type="InterPro" id="IPR036235">
    <property type="entry name" value="Ribosomal_bL12_oligo_N_sf"/>
</dbReference>
<dbReference type="NCBIfam" id="TIGR00855">
    <property type="entry name" value="L12"/>
    <property type="match status" value="1"/>
</dbReference>
<dbReference type="PANTHER" id="PTHR45987">
    <property type="entry name" value="39S RIBOSOMAL PROTEIN L12"/>
    <property type="match status" value="1"/>
</dbReference>
<dbReference type="PANTHER" id="PTHR45987:SF4">
    <property type="entry name" value="LARGE RIBOSOMAL SUBUNIT PROTEIN BL12M"/>
    <property type="match status" value="1"/>
</dbReference>
<dbReference type="Pfam" id="PF00542">
    <property type="entry name" value="Ribosomal_L12"/>
    <property type="match status" value="1"/>
</dbReference>
<dbReference type="Pfam" id="PF16320">
    <property type="entry name" value="Ribosomal_L12_N"/>
    <property type="match status" value="1"/>
</dbReference>
<dbReference type="SUPFAM" id="SSF54736">
    <property type="entry name" value="ClpS-like"/>
    <property type="match status" value="1"/>
</dbReference>
<dbReference type="SUPFAM" id="SSF48300">
    <property type="entry name" value="Ribosomal protein L7/12, oligomerisation (N-terminal) domain"/>
    <property type="match status" value="1"/>
</dbReference>
<evidence type="ECO:0000255" key="1">
    <source>
        <dbReference type="HAMAP-Rule" id="MF_00368"/>
    </source>
</evidence>
<evidence type="ECO:0000305" key="2"/>
<organism>
    <name type="scientific">Acholeplasma laidlawii (strain PG-8A)</name>
    <dbReference type="NCBI Taxonomy" id="441768"/>
    <lineage>
        <taxon>Bacteria</taxon>
        <taxon>Bacillati</taxon>
        <taxon>Mycoplasmatota</taxon>
        <taxon>Mollicutes</taxon>
        <taxon>Acholeplasmatales</taxon>
        <taxon>Acholeplasmataceae</taxon>
        <taxon>Acholeplasma</taxon>
    </lineage>
</organism>
<accession>A9NEL5</accession>
<feature type="chain" id="PRO_1000079779" description="Large ribosomal subunit protein bL12">
    <location>
        <begin position="1"/>
        <end position="123"/>
    </location>
</feature>
<name>RL7_ACHLI</name>
<reference key="1">
    <citation type="journal article" date="2011" name="J. Bacteriol.">
        <title>Complete genome and proteome of Acholeplasma laidlawii.</title>
        <authorList>
            <person name="Lazarev V.N."/>
            <person name="Levitskii S.A."/>
            <person name="Basovskii Y.I."/>
            <person name="Chukin M.M."/>
            <person name="Akopian T.A."/>
            <person name="Vereshchagin V.V."/>
            <person name="Kostrjukova E.S."/>
            <person name="Kovaleva G.Y."/>
            <person name="Kazanov M.D."/>
            <person name="Malko D.B."/>
            <person name="Vitreschak A.G."/>
            <person name="Sernova N.V."/>
            <person name="Gelfand M.S."/>
            <person name="Demina I.A."/>
            <person name="Serebryakova M.V."/>
            <person name="Galyamina M.A."/>
            <person name="Vtyurin N.N."/>
            <person name="Rogov S.I."/>
            <person name="Alexeev D.G."/>
            <person name="Ladygina V.G."/>
            <person name="Govorun V.M."/>
        </authorList>
    </citation>
    <scope>NUCLEOTIDE SEQUENCE [LARGE SCALE GENOMIC DNA]</scope>
    <source>
        <strain>PG-8A</strain>
    </source>
</reference>
<protein>
    <recommendedName>
        <fullName evidence="1">Large ribosomal subunit protein bL12</fullName>
    </recommendedName>
    <alternativeName>
        <fullName evidence="2">50S ribosomal protein L7/L12</fullName>
    </alternativeName>
</protein>
<proteinExistence type="inferred from homology"/>
<keyword id="KW-1185">Reference proteome</keyword>
<keyword id="KW-0687">Ribonucleoprotein</keyword>
<keyword id="KW-0689">Ribosomal protein</keyword>
<gene>
    <name evidence="1" type="primary">rplL</name>
    <name type="ordered locus">ACL_0169</name>
</gene>
<sequence>MAKLTKQAFVEALKEMSLLEIKELVDGLKEEFGIDPSAVAVAAGPAAAAEVEEKTEFNVVLKSFGDKKIEVIKVTREVTGLGLVEAKKLVETADAVIKENAKKDEAEALKAKFEAAGAVVEIV</sequence>
<comment type="function">
    <text evidence="1">Forms part of the ribosomal stalk which helps the ribosome interact with GTP-bound translation factors. Is thus essential for accurate translation.</text>
</comment>
<comment type="subunit">
    <text evidence="1">Homodimer. Part of the ribosomal stalk of the 50S ribosomal subunit. Forms a multimeric L10(L12)X complex, where L10 forms an elongated spine to which 2 to 4 L12 dimers bind in a sequential fashion. Binds GTP-bound translation factors.</text>
</comment>
<comment type="similarity">
    <text evidence="1">Belongs to the bacterial ribosomal protein bL12 family.</text>
</comment>